<accession>A1WZT1</accession>
<sequence length="458" mass="49959">MSAGKIVQVIGAVVDVEFPRDQVPQIYDALVVDERGLTLEVQQQLGDGVVRTIAMGSSDGLTRSEKVSNTGNPISVPVGQGTLGRIMDVLGEPVDEAGEVKTDERWSIHRNAPSYEEQSGGQELLETGIKVIDLLCPFAKGGKVGLFGGAGVGKTVNMMELIRNIAVEHSGYSVFAGVGERTREGNDFYHEMKDSNVLDKVSLVYGQMNEPPGNRLRVALTGLTMAEYFRDEGRDVLMFIDNIYRYTLAGQEVSALLGRMPSAVGYQPTLAEEMGKLQERITSTKTGSITSVQAVYVPADDLTDPAPATTFAHLDATIVLSRQIAELGIYPAVDPLDSTSRQLDPLVIGQEHYDVARGVQGVLQRYKELKDIIAILGMDELSEEDKLTVSRARKIQRFLSQPFFVAEVFTGMPGKYVSLKDTVASFKAIIDGEYDHLPEQAFYMVGTVEEAAEKAKNL</sequence>
<gene>
    <name evidence="1" type="primary">atpD</name>
    <name type="ordered locus">Hhal_2430</name>
</gene>
<dbReference type="EC" id="7.1.2.2" evidence="1"/>
<dbReference type="EMBL" id="CP000544">
    <property type="protein sequence ID" value="ABM63193.1"/>
    <property type="molecule type" value="Genomic_DNA"/>
</dbReference>
<dbReference type="RefSeq" id="WP_011815215.1">
    <property type="nucleotide sequence ID" value="NC_008789.1"/>
</dbReference>
<dbReference type="SMR" id="A1WZT1"/>
<dbReference type="STRING" id="349124.Hhal_2430"/>
<dbReference type="KEGG" id="hha:Hhal_2430"/>
<dbReference type="eggNOG" id="COG0055">
    <property type="taxonomic scope" value="Bacteria"/>
</dbReference>
<dbReference type="HOGENOM" id="CLU_022398_0_2_6"/>
<dbReference type="OrthoDB" id="9801639at2"/>
<dbReference type="Proteomes" id="UP000000647">
    <property type="component" value="Chromosome"/>
</dbReference>
<dbReference type="GO" id="GO:0005886">
    <property type="term" value="C:plasma membrane"/>
    <property type="evidence" value="ECO:0007669"/>
    <property type="project" value="UniProtKB-SubCell"/>
</dbReference>
<dbReference type="GO" id="GO:0045259">
    <property type="term" value="C:proton-transporting ATP synthase complex"/>
    <property type="evidence" value="ECO:0007669"/>
    <property type="project" value="UniProtKB-KW"/>
</dbReference>
<dbReference type="GO" id="GO:0005524">
    <property type="term" value="F:ATP binding"/>
    <property type="evidence" value="ECO:0007669"/>
    <property type="project" value="UniProtKB-UniRule"/>
</dbReference>
<dbReference type="GO" id="GO:0016887">
    <property type="term" value="F:ATP hydrolysis activity"/>
    <property type="evidence" value="ECO:0007669"/>
    <property type="project" value="InterPro"/>
</dbReference>
<dbReference type="GO" id="GO:0046933">
    <property type="term" value="F:proton-transporting ATP synthase activity, rotational mechanism"/>
    <property type="evidence" value="ECO:0007669"/>
    <property type="project" value="UniProtKB-UniRule"/>
</dbReference>
<dbReference type="CDD" id="cd18110">
    <property type="entry name" value="ATP-synt_F1_beta_C"/>
    <property type="match status" value="1"/>
</dbReference>
<dbReference type="CDD" id="cd18115">
    <property type="entry name" value="ATP-synt_F1_beta_N"/>
    <property type="match status" value="1"/>
</dbReference>
<dbReference type="CDD" id="cd01133">
    <property type="entry name" value="F1-ATPase_beta_CD"/>
    <property type="match status" value="1"/>
</dbReference>
<dbReference type="FunFam" id="1.10.1140.10:FF:000001">
    <property type="entry name" value="ATP synthase subunit beta"/>
    <property type="match status" value="1"/>
</dbReference>
<dbReference type="FunFam" id="3.40.50.300:FF:000004">
    <property type="entry name" value="ATP synthase subunit beta"/>
    <property type="match status" value="1"/>
</dbReference>
<dbReference type="Gene3D" id="2.40.10.170">
    <property type="match status" value="1"/>
</dbReference>
<dbReference type="Gene3D" id="1.10.1140.10">
    <property type="entry name" value="Bovine Mitochondrial F1-atpase, Atp Synthase Beta Chain, Chain D, domain 3"/>
    <property type="match status" value="1"/>
</dbReference>
<dbReference type="Gene3D" id="3.40.50.300">
    <property type="entry name" value="P-loop containing nucleotide triphosphate hydrolases"/>
    <property type="match status" value="1"/>
</dbReference>
<dbReference type="HAMAP" id="MF_01347">
    <property type="entry name" value="ATP_synth_beta_bact"/>
    <property type="match status" value="1"/>
</dbReference>
<dbReference type="InterPro" id="IPR003593">
    <property type="entry name" value="AAA+_ATPase"/>
</dbReference>
<dbReference type="InterPro" id="IPR055190">
    <property type="entry name" value="ATP-synt_VA_C"/>
</dbReference>
<dbReference type="InterPro" id="IPR005722">
    <property type="entry name" value="ATP_synth_F1_bsu"/>
</dbReference>
<dbReference type="InterPro" id="IPR020003">
    <property type="entry name" value="ATPase_a/bsu_AS"/>
</dbReference>
<dbReference type="InterPro" id="IPR050053">
    <property type="entry name" value="ATPase_alpha/beta_chains"/>
</dbReference>
<dbReference type="InterPro" id="IPR004100">
    <property type="entry name" value="ATPase_F1/V1/A1_a/bsu_N"/>
</dbReference>
<dbReference type="InterPro" id="IPR036121">
    <property type="entry name" value="ATPase_F1/V1/A1_a/bsu_N_sf"/>
</dbReference>
<dbReference type="InterPro" id="IPR000194">
    <property type="entry name" value="ATPase_F1/V1/A1_a/bsu_nucl-bd"/>
</dbReference>
<dbReference type="InterPro" id="IPR024034">
    <property type="entry name" value="ATPase_F1/V1_b/a_C"/>
</dbReference>
<dbReference type="InterPro" id="IPR027417">
    <property type="entry name" value="P-loop_NTPase"/>
</dbReference>
<dbReference type="NCBIfam" id="TIGR01039">
    <property type="entry name" value="atpD"/>
    <property type="match status" value="1"/>
</dbReference>
<dbReference type="PANTHER" id="PTHR15184">
    <property type="entry name" value="ATP SYNTHASE"/>
    <property type="match status" value="1"/>
</dbReference>
<dbReference type="PANTHER" id="PTHR15184:SF71">
    <property type="entry name" value="ATP SYNTHASE SUBUNIT BETA, MITOCHONDRIAL"/>
    <property type="match status" value="1"/>
</dbReference>
<dbReference type="Pfam" id="PF00006">
    <property type="entry name" value="ATP-synt_ab"/>
    <property type="match status" value="1"/>
</dbReference>
<dbReference type="Pfam" id="PF02874">
    <property type="entry name" value="ATP-synt_ab_N"/>
    <property type="match status" value="1"/>
</dbReference>
<dbReference type="Pfam" id="PF22919">
    <property type="entry name" value="ATP-synt_VA_C"/>
    <property type="match status" value="1"/>
</dbReference>
<dbReference type="SMART" id="SM00382">
    <property type="entry name" value="AAA"/>
    <property type="match status" value="1"/>
</dbReference>
<dbReference type="SUPFAM" id="SSF47917">
    <property type="entry name" value="C-terminal domain of alpha and beta subunits of F1 ATP synthase"/>
    <property type="match status" value="1"/>
</dbReference>
<dbReference type="SUPFAM" id="SSF50615">
    <property type="entry name" value="N-terminal domain of alpha and beta subunits of F1 ATP synthase"/>
    <property type="match status" value="1"/>
</dbReference>
<dbReference type="SUPFAM" id="SSF52540">
    <property type="entry name" value="P-loop containing nucleoside triphosphate hydrolases"/>
    <property type="match status" value="1"/>
</dbReference>
<dbReference type="PROSITE" id="PS00152">
    <property type="entry name" value="ATPASE_ALPHA_BETA"/>
    <property type="match status" value="1"/>
</dbReference>
<evidence type="ECO:0000255" key="1">
    <source>
        <dbReference type="HAMAP-Rule" id="MF_01347"/>
    </source>
</evidence>
<reference key="1">
    <citation type="submission" date="2006-12" db="EMBL/GenBank/DDBJ databases">
        <title>Complete sequence of Halorhodospira halophila SL1.</title>
        <authorList>
            <consortium name="US DOE Joint Genome Institute"/>
            <person name="Copeland A."/>
            <person name="Lucas S."/>
            <person name="Lapidus A."/>
            <person name="Barry K."/>
            <person name="Detter J.C."/>
            <person name="Glavina del Rio T."/>
            <person name="Hammon N."/>
            <person name="Israni S."/>
            <person name="Dalin E."/>
            <person name="Tice H."/>
            <person name="Pitluck S."/>
            <person name="Saunders E."/>
            <person name="Brettin T."/>
            <person name="Bruce D."/>
            <person name="Han C."/>
            <person name="Tapia R."/>
            <person name="Schmutz J."/>
            <person name="Larimer F."/>
            <person name="Land M."/>
            <person name="Hauser L."/>
            <person name="Kyrpides N."/>
            <person name="Mikhailova N."/>
            <person name="Hoff W."/>
            <person name="Richardson P."/>
        </authorList>
    </citation>
    <scope>NUCLEOTIDE SEQUENCE [LARGE SCALE GENOMIC DNA]</scope>
    <source>
        <strain>DSM 244 / SL1</strain>
    </source>
</reference>
<proteinExistence type="inferred from homology"/>
<protein>
    <recommendedName>
        <fullName evidence="1">ATP synthase subunit beta</fullName>
        <ecNumber evidence="1">7.1.2.2</ecNumber>
    </recommendedName>
    <alternativeName>
        <fullName evidence="1">ATP synthase F1 sector subunit beta</fullName>
    </alternativeName>
    <alternativeName>
        <fullName evidence="1">F-ATPase subunit beta</fullName>
    </alternativeName>
</protein>
<feature type="chain" id="PRO_1000055121" description="ATP synthase subunit beta">
    <location>
        <begin position="1"/>
        <end position="458"/>
    </location>
</feature>
<feature type="binding site" evidence="1">
    <location>
        <begin position="148"/>
        <end position="155"/>
    </location>
    <ligand>
        <name>ATP</name>
        <dbReference type="ChEBI" id="CHEBI:30616"/>
    </ligand>
</feature>
<comment type="function">
    <text evidence="1">Produces ATP from ADP in the presence of a proton gradient across the membrane. The catalytic sites are hosted primarily by the beta subunits.</text>
</comment>
<comment type="catalytic activity">
    <reaction evidence="1">
        <text>ATP + H2O + 4 H(+)(in) = ADP + phosphate + 5 H(+)(out)</text>
        <dbReference type="Rhea" id="RHEA:57720"/>
        <dbReference type="ChEBI" id="CHEBI:15377"/>
        <dbReference type="ChEBI" id="CHEBI:15378"/>
        <dbReference type="ChEBI" id="CHEBI:30616"/>
        <dbReference type="ChEBI" id="CHEBI:43474"/>
        <dbReference type="ChEBI" id="CHEBI:456216"/>
        <dbReference type="EC" id="7.1.2.2"/>
    </reaction>
</comment>
<comment type="subunit">
    <text evidence="1">F-type ATPases have 2 components, CF(1) - the catalytic core - and CF(0) - the membrane proton channel. CF(1) has five subunits: alpha(3), beta(3), gamma(1), delta(1), epsilon(1). CF(0) has three main subunits: a(1), b(2) and c(9-12). The alpha and beta chains form an alternating ring which encloses part of the gamma chain. CF(1) is attached to CF(0) by a central stalk formed by the gamma and epsilon chains, while a peripheral stalk is formed by the delta and b chains.</text>
</comment>
<comment type="subcellular location">
    <subcellularLocation>
        <location evidence="1">Cell inner membrane</location>
        <topology evidence="1">Peripheral membrane protein</topology>
    </subcellularLocation>
</comment>
<comment type="similarity">
    <text evidence="1">Belongs to the ATPase alpha/beta chains family.</text>
</comment>
<name>ATPB_HALHL</name>
<organism>
    <name type="scientific">Halorhodospira halophila (strain DSM 244 / SL1)</name>
    <name type="common">Ectothiorhodospira halophila (strain DSM 244 / SL1)</name>
    <dbReference type="NCBI Taxonomy" id="349124"/>
    <lineage>
        <taxon>Bacteria</taxon>
        <taxon>Pseudomonadati</taxon>
        <taxon>Pseudomonadota</taxon>
        <taxon>Gammaproteobacteria</taxon>
        <taxon>Chromatiales</taxon>
        <taxon>Ectothiorhodospiraceae</taxon>
        <taxon>Halorhodospira</taxon>
    </lineage>
</organism>
<keyword id="KW-0066">ATP synthesis</keyword>
<keyword id="KW-0067">ATP-binding</keyword>
<keyword id="KW-0997">Cell inner membrane</keyword>
<keyword id="KW-1003">Cell membrane</keyword>
<keyword id="KW-0139">CF(1)</keyword>
<keyword id="KW-0375">Hydrogen ion transport</keyword>
<keyword id="KW-0406">Ion transport</keyword>
<keyword id="KW-0472">Membrane</keyword>
<keyword id="KW-0547">Nucleotide-binding</keyword>
<keyword id="KW-1185">Reference proteome</keyword>
<keyword id="KW-1278">Translocase</keyword>
<keyword id="KW-0813">Transport</keyword>